<evidence type="ECO:0000255" key="1">
    <source>
        <dbReference type="HAMAP-Rule" id="MF_01047"/>
    </source>
</evidence>
<name>YCFP_ECOSE</name>
<reference key="1">
    <citation type="journal article" date="2008" name="DNA Res.">
        <title>Complete genome sequence and comparative analysis of the wild-type commensal Escherichia coli strain SE11 isolated from a healthy adult.</title>
        <authorList>
            <person name="Oshima K."/>
            <person name="Toh H."/>
            <person name="Ogura Y."/>
            <person name="Sasamoto H."/>
            <person name="Morita H."/>
            <person name="Park S.-H."/>
            <person name="Ooka T."/>
            <person name="Iyoda S."/>
            <person name="Taylor T.D."/>
            <person name="Hayashi T."/>
            <person name="Itoh K."/>
            <person name="Hattori M."/>
        </authorList>
    </citation>
    <scope>NUCLEOTIDE SEQUENCE [LARGE SCALE GENOMIC DNA]</scope>
    <source>
        <strain>SE11</strain>
    </source>
</reference>
<comment type="similarity">
    <text evidence="1">Belongs to the UPF0227 family.</text>
</comment>
<gene>
    <name evidence="1" type="primary">ycfP</name>
    <name type="ordered locus">ECSE_1173</name>
</gene>
<feature type="chain" id="PRO_1000136190" description="UPF0227 protein YcfP">
    <location>
        <begin position="1"/>
        <end position="180"/>
    </location>
</feature>
<accession>B6I9I6</accession>
<sequence length="180" mass="21226">MIIYLHGFDSNSPGNHEKVLQLQFIDPDVRLISYSTRHPKHDMQHLLKEVDKMLQLNVDERPLICGVGLGGYWAERIGFLCDIRQVIFNPNLFPYENMEGKIDRPEEYADIATKCVTNFREKNRDRCLVILSRNDEALNSQRTSEELHHYYEIVWDEEQTHKFKNISPHLQRIKAFKTLG</sequence>
<protein>
    <recommendedName>
        <fullName evidence="1">UPF0227 protein YcfP</fullName>
    </recommendedName>
</protein>
<proteinExistence type="inferred from homology"/>
<dbReference type="EMBL" id="AP009240">
    <property type="protein sequence ID" value="BAG76697.1"/>
    <property type="molecule type" value="Genomic_DNA"/>
</dbReference>
<dbReference type="RefSeq" id="WP_000587933.1">
    <property type="nucleotide sequence ID" value="NC_011415.1"/>
</dbReference>
<dbReference type="SMR" id="B6I9I6"/>
<dbReference type="ESTHER" id="ecoli-ycfp">
    <property type="family name" value="abh_upf00227"/>
</dbReference>
<dbReference type="GeneID" id="93776300"/>
<dbReference type="KEGG" id="ecy:ECSE_1173"/>
<dbReference type="HOGENOM" id="CLU_128769_0_0_6"/>
<dbReference type="Proteomes" id="UP000008199">
    <property type="component" value="Chromosome"/>
</dbReference>
<dbReference type="FunFam" id="3.40.50.1820:FF:000007">
    <property type="entry name" value="UPF0227 protein YcfP"/>
    <property type="match status" value="1"/>
</dbReference>
<dbReference type="Gene3D" id="3.40.50.1820">
    <property type="entry name" value="alpha/beta hydrolase"/>
    <property type="match status" value="1"/>
</dbReference>
<dbReference type="HAMAP" id="MF_01047">
    <property type="entry name" value="UPF0227"/>
    <property type="match status" value="1"/>
</dbReference>
<dbReference type="InterPro" id="IPR029058">
    <property type="entry name" value="AB_hydrolase_fold"/>
</dbReference>
<dbReference type="InterPro" id="IPR022987">
    <property type="entry name" value="UPF0227"/>
</dbReference>
<dbReference type="InterPro" id="IPR008886">
    <property type="entry name" value="UPF0227/Esterase_YqiA"/>
</dbReference>
<dbReference type="NCBIfam" id="NF003431">
    <property type="entry name" value="PRK04940.1"/>
    <property type="match status" value="1"/>
</dbReference>
<dbReference type="PANTHER" id="PTHR35602">
    <property type="entry name" value="ESTERASE YQIA-RELATED"/>
    <property type="match status" value="1"/>
</dbReference>
<dbReference type="PANTHER" id="PTHR35602:SF2">
    <property type="entry name" value="UPF0227 PROTEIN YCFP"/>
    <property type="match status" value="1"/>
</dbReference>
<dbReference type="Pfam" id="PF05728">
    <property type="entry name" value="UPF0227"/>
    <property type="match status" value="1"/>
</dbReference>
<dbReference type="SUPFAM" id="SSF53474">
    <property type="entry name" value="alpha/beta-Hydrolases"/>
    <property type="match status" value="1"/>
</dbReference>
<organism>
    <name type="scientific">Escherichia coli (strain SE11)</name>
    <dbReference type="NCBI Taxonomy" id="409438"/>
    <lineage>
        <taxon>Bacteria</taxon>
        <taxon>Pseudomonadati</taxon>
        <taxon>Pseudomonadota</taxon>
        <taxon>Gammaproteobacteria</taxon>
        <taxon>Enterobacterales</taxon>
        <taxon>Enterobacteriaceae</taxon>
        <taxon>Escherichia</taxon>
    </lineage>
</organism>